<reference key="1">
    <citation type="journal article" date="2003" name="Nature">
        <title>The genome sequence of the filamentous fungus Neurospora crassa.</title>
        <authorList>
            <person name="Galagan J.E."/>
            <person name="Calvo S.E."/>
            <person name="Borkovich K.A."/>
            <person name="Selker E.U."/>
            <person name="Read N.D."/>
            <person name="Jaffe D.B."/>
            <person name="FitzHugh W."/>
            <person name="Ma L.-J."/>
            <person name="Smirnov S."/>
            <person name="Purcell S."/>
            <person name="Rehman B."/>
            <person name="Elkins T."/>
            <person name="Engels R."/>
            <person name="Wang S."/>
            <person name="Nielsen C.B."/>
            <person name="Butler J."/>
            <person name="Endrizzi M."/>
            <person name="Qui D."/>
            <person name="Ianakiev P."/>
            <person name="Bell-Pedersen D."/>
            <person name="Nelson M.A."/>
            <person name="Werner-Washburne M."/>
            <person name="Selitrennikoff C.P."/>
            <person name="Kinsey J.A."/>
            <person name="Braun E.L."/>
            <person name="Zelter A."/>
            <person name="Schulte U."/>
            <person name="Kothe G.O."/>
            <person name="Jedd G."/>
            <person name="Mewes H.-W."/>
            <person name="Staben C."/>
            <person name="Marcotte E."/>
            <person name="Greenberg D."/>
            <person name="Roy A."/>
            <person name="Foley K."/>
            <person name="Naylor J."/>
            <person name="Stange-Thomann N."/>
            <person name="Barrett R."/>
            <person name="Gnerre S."/>
            <person name="Kamal M."/>
            <person name="Kamvysselis M."/>
            <person name="Mauceli E.W."/>
            <person name="Bielke C."/>
            <person name="Rudd S."/>
            <person name="Frishman D."/>
            <person name="Krystofova S."/>
            <person name="Rasmussen C."/>
            <person name="Metzenberg R.L."/>
            <person name="Perkins D.D."/>
            <person name="Kroken S."/>
            <person name="Cogoni C."/>
            <person name="Macino G."/>
            <person name="Catcheside D.E.A."/>
            <person name="Li W."/>
            <person name="Pratt R.J."/>
            <person name="Osmani S.A."/>
            <person name="DeSouza C.P.C."/>
            <person name="Glass N.L."/>
            <person name="Orbach M.J."/>
            <person name="Berglund J.A."/>
            <person name="Voelker R."/>
            <person name="Yarden O."/>
            <person name="Plamann M."/>
            <person name="Seiler S."/>
            <person name="Dunlap J.C."/>
            <person name="Radford A."/>
            <person name="Aramayo R."/>
            <person name="Natvig D.O."/>
            <person name="Alex L.A."/>
            <person name="Mannhaupt G."/>
            <person name="Ebbole D.J."/>
            <person name="Freitag M."/>
            <person name="Paulsen I."/>
            <person name="Sachs M.S."/>
            <person name="Lander E.S."/>
            <person name="Nusbaum C."/>
            <person name="Birren B.W."/>
        </authorList>
    </citation>
    <scope>NUCLEOTIDE SEQUENCE [LARGE SCALE GENOMIC DNA]</scope>
    <source>
        <strain>ATCC 24698 / 74-OR23-1A / CBS 708.71 / DSM 1257 / FGSC 987</strain>
    </source>
</reference>
<keyword id="KW-0067">ATP-binding</keyword>
<keyword id="KW-0072">Autophagy</keyword>
<keyword id="KW-0963">Cytoplasm</keyword>
<keyword id="KW-0418">Kinase</keyword>
<keyword id="KW-0472">Membrane</keyword>
<keyword id="KW-0547">Nucleotide-binding</keyword>
<keyword id="KW-0653">Protein transport</keyword>
<keyword id="KW-1185">Reference proteome</keyword>
<keyword id="KW-0723">Serine/threonine-protein kinase</keyword>
<keyword id="KW-0808">Transferase</keyword>
<keyword id="KW-0813">Transport</keyword>
<protein>
    <recommendedName>
        <fullName evidence="5">Serine/threonine-protein kinase apg-1</fullName>
        <ecNumber evidence="1">2.7.11.1</ecNumber>
    </recommendedName>
    <alternativeName>
        <fullName evidence="1">Autophagy-related protein 1</fullName>
    </alternativeName>
</protein>
<evidence type="ECO:0000250" key="1">
    <source>
        <dbReference type="UniProtKB" id="P53104"/>
    </source>
</evidence>
<evidence type="ECO:0000255" key="2">
    <source>
        <dbReference type="PROSITE-ProRule" id="PRU00159"/>
    </source>
</evidence>
<evidence type="ECO:0000255" key="3">
    <source>
        <dbReference type="PROSITE-ProRule" id="PRU10027"/>
    </source>
</evidence>
<evidence type="ECO:0000256" key="4">
    <source>
        <dbReference type="SAM" id="MobiDB-lite"/>
    </source>
</evidence>
<evidence type="ECO:0000305" key="5"/>
<evidence type="ECO:0000312" key="6">
    <source>
        <dbReference type="EMBL" id="EAA27175.2"/>
    </source>
</evidence>
<name>ATG1_NEUCR</name>
<dbReference type="EC" id="2.7.11.1" evidence="1"/>
<dbReference type="EMBL" id="CM002238">
    <property type="protein sequence ID" value="EAA27175.2"/>
    <property type="molecule type" value="Genomic_DNA"/>
</dbReference>
<dbReference type="RefSeq" id="XP_956411.2">
    <property type="nucleotide sequence ID" value="XM_951318.2"/>
</dbReference>
<dbReference type="SMR" id="Q7RX99"/>
<dbReference type="FunCoup" id="Q7RX99">
    <property type="interactions" value="70"/>
</dbReference>
<dbReference type="STRING" id="367110.Q7RX99"/>
<dbReference type="PaxDb" id="5141-EFNCRP00000000238"/>
<dbReference type="EnsemblFungi" id="EAA27175">
    <property type="protein sequence ID" value="EAA27175"/>
    <property type="gene ID" value="NCU00188"/>
</dbReference>
<dbReference type="GeneID" id="3872551"/>
<dbReference type="KEGG" id="ncr:NCU00188"/>
<dbReference type="VEuPathDB" id="FungiDB:NCU00188"/>
<dbReference type="HOGENOM" id="CLU_006447_0_0_1"/>
<dbReference type="InParanoid" id="Q7RX99"/>
<dbReference type="OrthoDB" id="346907at2759"/>
<dbReference type="Proteomes" id="UP000001805">
    <property type="component" value="Chromosome 3, Linkage Group III"/>
</dbReference>
<dbReference type="GO" id="GO:0005776">
    <property type="term" value="C:autophagosome"/>
    <property type="evidence" value="ECO:0000318"/>
    <property type="project" value="GO_Central"/>
</dbReference>
<dbReference type="GO" id="GO:0005737">
    <property type="term" value="C:cytoplasm"/>
    <property type="evidence" value="ECO:0000318"/>
    <property type="project" value="GO_Central"/>
</dbReference>
<dbReference type="GO" id="GO:0005829">
    <property type="term" value="C:cytosol"/>
    <property type="evidence" value="ECO:0000318"/>
    <property type="project" value="GO_Central"/>
</dbReference>
<dbReference type="GO" id="GO:0000407">
    <property type="term" value="C:phagophore assembly site"/>
    <property type="evidence" value="ECO:0000318"/>
    <property type="project" value="GO_Central"/>
</dbReference>
<dbReference type="GO" id="GO:0034045">
    <property type="term" value="C:phagophore assembly site membrane"/>
    <property type="evidence" value="ECO:0000318"/>
    <property type="project" value="GO_Central"/>
</dbReference>
<dbReference type="GO" id="GO:0005524">
    <property type="term" value="F:ATP binding"/>
    <property type="evidence" value="ECO:0007669"/>
    <property type="project" value="UniProtKB-KW"/>
</dbReference>
<dbReference type="GO" id="GO:0106310">
    <property type="term" value="F:protein serine kinase activity"/>
    <property type="evidence" value="ECO:0007669"/>
    <property type="project" value="RHEA"/>
</dbReference>
<dbReference type="GO" id="GO:0004674">
    <property type="term" value="F:protein serine/threonine kinase activity"/>
    <property type="evidence" value="ECO:0000318"/>
    <property type="project" value="GO_Central"/>
</dbReference>
<dbReference type="GO" id="GO:0000045">
    <property type="term" value="P:autophagosome assembly"/>
    <property type="evidence" value="ECO:0000318"/>
    <property type="project" value="GO_Central"/>
</dbReference>
<dbReference type="GO" id="GO:0000423">
    <property type="term" value="P:mitophagy"/>
    <property type="evidence" value="ECO:0000318"/>
    <property type="project" value="GO_Central"/>
</dbReference>
<dbReference type="GO" id="GO:0034727">
    <property type="term" value="P:piecemeal microautophagy of the nucleus"/>
    <property type="evidence" value="ECO:0000318"/>
    <property type="project" value="GO_Central"/>
</dbReference>
<dbReference type="GO" id="GO:0015031">
    <property type="term" value="P:protein transport"/>
    <property type="evidence" value="ECO:0007669"/>
    <property type="project" value="UniProtKB-KW"/>
</dbReference>
<dbReference type="GO" id="GO:0010506">
    <property type="term" value="P:regulation of autophagy"/>
    <property type="evidence" value="ECO:0000318"/>
    <property type="project" value="GO_Central"/>
</dbReference>
<dbReference type="GO" id="GO:0042594">
    <property type="term" value="P:response to starvation"/>
    <property type="evidence" value="ECO:0000318"/>
    <property type="project" value="GO_Central"/>
</dbReference>
<dbReference type="GO" id="GO:0061709">
    <property type="term" value="P:reticulophagy"/>
    <property type="evidence" value="ECO:0000318"/>
    <property type="project" value="GO_Central"/>
</dbReference>
<dbReference type="CDD" id="cd14009">
    <property type="entry name" value="STKc_ATG1_ULK_like"/>
    <property type="match status" value="1"/>
</dbReference>
<dbReference type="FunFam" id="3.30.200.20:FF:000042">
    <property type="entry name" value="Aurora kinase A"/>
    <property type="match status" value="1"/>
</dbReference>
<dbReference type="FunFam" id="1.10.510.10:FF:000817">
    <property type="entry name" value="Serine/threonine-protein kinase ATG1"/>
    <property type="match status" value="1"/>
</dbReference>
<dbReference type="Gene3D" id="1.10.510.10">
    <property type="entry name" value="Transferase(Phosphotransferase) domain 1"/>
    <property type="match status" value="1"/>
</dbReference>
<dbReference type="InterPro" id="IPR045269">
    <property type="entry name" value="Atg1-like"/>
</dbReference>
<dbReference type="InterPro" id="IPR048941">
    <property type="entry name" value="ATG1-like_MIT2"/>
</dbReference>
<dbReference type="InterPro" id="IPR022708">
    <property type="entry name" value="Atg1-like_tMIT"/>
</dbReference>
<dbReference type="InterPro" id="IPR011009">
    <property type="entry name" value="Kinase-like_dom_sf"/>
</dbReference>
<dbReference type="InterPro" id="IPR000719">
    <property type="entry name" value="Prot_kinase_dom"/>
</dbReference>
<dbReference type="InterPro" id="IPR017441">
    <property type="entry name" value="Protein_kinase_ATP_BS"/>
</dbReference>
<dbReference type="InterPro" id="IPR008271">
    <property type="entry name" value="Ser/Thr_kinase_AS"/>
</dbReference>
<dbReference type="PANTHER" id="PTHR24348:SF22">
    <property type="entry name" value="NON-SPECIFIC SERINE_THREONINE PROTEIN KINASE"/>
    <property type="match status" value="1"/>
</dbReference>
<dbReference type="PANTHER" id="PTHR24348">
    <property type="entry name" value="SERINE/THREONINE-PROTEIN KINASE UNC-51-RELATED"/>
    <property type="match status" value="1"/>
</dbReference>
<dbReference type="Pfam" id="PF12063">
    <property type="entry name" value="ATG1-like_MIT1"/>
    <property type="match status" value="1"/>
</dbReference>
<dbReference type="Pfam" id="PF21127">
    <property type="entry name" value="ATG1-like_MIT2"/>
    <property type="match status" value="1"/>
</dbReference>
<dbReference type="Pfam" id="PF00069">
    <property type="entry name" value="Pkinase"/>
    <property type="match status" value="1"/>
</dbReference>
<dbReference type="SMART" id="SM00220">
    <property type="entry name" value="S_TKc"/>
    <property type="match status" value="1"/>
</dbReference>
<dbReference type="SUPFAM" id="SSF56112">
    <property type="entry name" value="Protein kinase-like (PK-like)"/>
    <property type="match status" value="1"/>
</dbReference>
<dbReference type="PROSITE" id="PS00107">
    <property type="entry name" value="PROTEIN_KINASE_ATP"/>
    <property type="match status" value="1"/>
</dbReference>
<dbReference type="PROSITE" id="PS50011">
    <property type="entry name" value="PROTEIN_KINASE_DOM"/>
    <property type="match status" value="1"/>
</dbReference>
<dbReference type="PROSITE" id="PS00108">
    <property type="entry name" value="PROTEIN_KINASE_ST"/>
    <property type="match status" value="1"/>
</dbReference>
<accession>Q7RX99</accession>
<gene>
    <name evidence="6" type="primary">apg-1</name>
    <name evidence="1" type="synonym">atg1</name>
    <name evidence="6" type="ORF">NCU00188</name>
</gene>
<proteinExistence type="inferred from homology"/>
<feature type="chain" id="PRO_0000085649" description="Serine/threonine-protein kinase apg-1">
    <location>
        <begin position="1"/>
        <end position="968"/>
    </location>
</feature>
<feature type="domain" description="Protein kinase" evidence="2">
    <location>
        <begin position="24"/>
        <end position="329"/>
    </location>
</feature>
<feature type="region of interest" description="Disordered" evidence="4">
    <location>
        <begin position="334"/>
        <end position="500"/>
    </location>
</feature>
<feature type="region of interest" description="Disordered" evidence="4">
    <location>
        <begin position="528"/>
        <end position="585"/>
    </location>
</feature>
<feature type="region of interest" description="Disordered" evidence="4">
    <location>
        <begin position="884"/>
        <end position="906"/>
    </location>
</feature>
<feature type="region of interest" description="Disordered" evidence="4">
    <location>
        <begin position="939"/>
        <end position="968"/>
    </location>
</feature>
<feature type="compositionally biased region" description="Basic and acidic residues" evidence="4">
    <location>
        <begin position="350"/>
        <end position="361"/>
    </location>
</feature>
<feature type="compositionally biased region" description="Basic and acidic residues" evidence="4">
    <location>
        <begin position="371"/>
        <end position="380"/>
    </location>
</feature>
<feature type="compositionally biased region" description="Basic and acidic residues" evidence="4">
    <location>
        <begin position="417"/>
        <end position="431"/>
    </location>
</feature>
<feature type="compositionally biased region" description="Polar residues" evidence="4">
    <location>
        <begin position="441"/>
        <end position="452"/>
    </location>
</feature>
<feature type="compositionally biased region" description="Polar residues" evidence="4">
    <location>
        <begin position="528"/>
        <end position="538"/>
    </location>
</feature>
<feature type="compositionally biased region" description="Polar residues" evidence="4">
    <location>
        <begin position="545"/>
        <end position="557"/>
    </location>
</feature>
<feature type="active site" description="Proton acceptor" evidence="2 3">
    <location>
        <position position="167"/>
    </location>
</feature>
<feature type="binding site" evidence="2">
    <location>
        <begin position="30"/>
        <end position="38"/>
    </location>
    <ligand>
        <name>ATP</name>
        <dbReference type="ChEBI" id="CHEBI:30616"/>
    </ligand>
</feature>
<feature type="binding site" evidence="2">
    <location>
        <position position="53"/>
    </location>
    <ligand>
        <name>ATP</name>
        <dbReference type="ChEBI" id="CHEBI:30616"/>
    </ligand>
</feature>
<sequence>MSDRTSASSSSRRTKQNYDAIGSFVIDQEIGKGSFAKVYLGRHKVTGALVAVKSVELARLNKKLKENLYGEIQILKTLRHPHIVALHDCVESSTHINLIMEYCELGDLSLFIKKRDKLITNPYTHDLARKYPVYPNAGLNEVVTRHFLKQLASALQFLRAGDFVHRDVKPQNLLLLPSPHMMANNKTAKHIMSGSYDSFTPAAGLASAPMLKLADFGFARVLPSTSLAETLCGSPLYMAPEILRYEKYDAKADLWSVGTVLYEMVTGRPPFKASNHVELLRKIESSGDVIKFTRESVVSQEMKGLIRALLKKNPVERISFEDLFNHPVVTEPIPGLVEDDIPKPPRRRSLKEERPVSRAEDSLVPSRKQSLRKDLADREGAPQTAGPSSPKPRRSSPLATPNEPVEISKPNYFQIPPREDRLSYSPRKEAADGLGIKRPQVQPSTSAPTRPSSYVDRRHRSSNASLRAPVREANPPPNDVTRTKPRGMGTKPMTEEERAAQDIAFERDYVLVDKKHLEVNALADQISMYPQQPQSPKSAQIVRRATQQGSPTSTSGAVPSPPSRALQLAQGHSRQGSYDKALGTSPSKATSVISKAIQDASLRLFGFKYAPHLLSKGPSPVPMYNPFPTYPAPNTPTGLISDGKQGTPVDEDSRVAQCIEDHATRSDVVYGFAEVKYKQLVPLAPSMDHGLGGAPIEKSAEEDGLTAEAIVSLSEEALVLYVKALTLLAKSMDIASLWWSRKNKVESTNSITSAARDSANSEALALRINGAVQWIRSRFNEVLEKAEIVRLKLAEAQKRLPEDHPSHPNNHANDSTALNSLSTVGVFLSEGISAERLMYDRAIEMSRAAAINEIANEDLPGCEISYITAIRMLEAVLDQDDDHLPKRKVSGASKEEKTGANELSDEMNNEDKQVVQNVINMVNNRLTVLRKKLRLIESASKAQQQEEQKQQNLMRRRSGEMTSRSVPA</sequence>
<organism>
    <name type="scientific">Neurospora crassa (strain ATCC 24698 / 74-OR23-1A / CBS 708.71 / DSM 1257 / FGSC 987)</name>
    <dbReference type="NCBI Taxonomy" id="367110"/>
    <lineage>
        <taxon>Eukaryota</taxon>
        <taxon>Fungi</taxon>
        <taxon>Dikarya</taxon>
        <taxon>Ascomycota</taxon>
        <taxon>Pezizomycotina</taxon>
        <taxon>Sordariomycetes</taxon>
        <taxon>Sordariomycetidae</taxon>
        <taxon>Sordariales</taxon>
        <taxon>Sordariaceae</taxon>
        <taxon>Neurospora</taxon>
    </lineage>
</organism>
<comment type="function">
    <text evidence="1">Serine/threonine protein kinase involved in the cytoplasm to vacuole transport (Cvt) and found to be essential in autophagy, where it is required for the formation of autophagosomes. Involved in the clearance of protein aggregates which cannot be efficiently cleared by the proteasome. Required for selective autophagic degradation of the nucleus (nucleophagy) as well as for mitophagy which contributes to regulate mitochondrial quantity and quality by eliminating the mitochondria to a basal level to fulfill cellular energy requirements and preventing excess ROS production. Also involved in endoplasmic reticulum-specific autophagic process, in selective removal of ER-associated degradation (ERAD) substrates. Plays a key role in ATG9 and ATG23 cycling through the pre-autophagosomal structure and is necessary to promote ATG18 binding to ATG9 through phosphorylation of ATG9. Catalyzes phosphorylation of ATG4, decreasing the interaction between ATG4 and ATG8 and impairing deconjugation of PE-conjugated forms of ATG8.</text>
</comment>
<comment type="catalytic activity">
    <reaction evidence="1">
        <text>L-seryl-[protein] + ATP = O-phospho-L-seryl-[protein] + ADP + H(+)</text>
        <dbReference type="Rhea" id="RHEA:17989"/>
        <dbReference type="Rhea" id="RHEA-COMP:9863"/>
        <dbReference type="Rhea" id="RHEA-COMP:11604"/>
        <dbReference type="ChEBI" id="CHEBI:15378"/>
        <dbReference type="ChEBI" id="CHEBI:29999"/>
        <dbReference type="ChEBI" id="CHEBI:30616"/>
        <dbReference type="ChEBI" id="CHEBI:83421"/>
        <dbReference type="ChEBI" id="CHEBI:456216"/>
        <dbReference type="EC" id="2.7.11.1"/>
    </reaction>
</comment>
<comment type="catalytic activity">
    <reaction evidence="1">
        <text>L-threonyl-[protein] + ATP = O-phospho-L-threonyl-[protein] + ADP + H(+)</text>
        <dbReference type="Rhea" id="RHEA:46608"/>
        <dbReference type="Rhea" id="RHEA-COMP:11060"/>
        <dbReference type="Rhea" id="RHEA-COMP:11605"/>
        <dbReference type="ChEBI" id="CHEBI:15378"/>
        <dbReference type="ChEBI" id="CHEBI:30013"/>
        <dbReference type="ChEBI" id="CHEBI:30616"/>
        <dbReference type="ChEBI" id="CHEBI:61977"/>
        <dbReference type="ChEBI" id="CHEBI:456216"/>
        <dbReference type="EC" id="2.7.11.1"/>
    </reaction>
</comment>
<comment type="subunit">
    <text evidence="1">Homodimer. Forms a ternary complex with ATG13 and ATG17.</text>
</comment>
<comment type="subcellular location">
    <subcellularLocation>
        <location evidence="1">Cytoplasm</location>
    </subcellularLocation>
    <subcellularLocation>
        <location evidence="1">Preautophagosomal structure membrane</location>
        <topology evidence="1">Peripheral membrane protein</topology>
    </subcellularLocation>
</comment>
<comment type="similarity">
    <text evidence="2">Belongs to the protein kinase superfamily. Ser/Thr protein kinase family. APG1/unc-51/ULK1 subfamily.</text>
</comment>